<keyword id="KW-0963">Cytoplasm</keyword>
<keyword id="KW-0350">Heme biosynthesis</keyword>
<keyword id="KW-0408">Iron</keyword>
<keyword id="KW-0456">Lyase</keyword>
<keyword id="KW-0479">Metal-binding</keyword>
<keyword id="KW-0627">Porphyrin biosynthesis</keyword>
<keyword id="KW-1185">Reference proteome</keyword>
<protein>
    <recommendedName>
        <fullName evidence="1">Ferrochelatase</fullName>
        <ecNumber evidence="1">4.98.1.1</ecNumber>
    </recommendedName>
    <alternativeName>
        <fullName evidence="1">Heme synthase</fullName>
    </alternativeName>
    <alternativeName>
        <fullName evidence="1">Protoheme ferro-lyase</fullName>
    </alternativeName>
</protein>
<gene>
    <name evidence="1" type="primary">hemH</name>
    <name type="ordered locus">ETA_24640</name>
</gene>
<organism>
    <name type="scientific">Erwinia tasmaniensis (strain DSM 17950 / CFBP 7177 / CIP 109463 / NCPPB 4357 / Et1/99)</name>
    <dbReference type="NCBI Taxonomy" id="465817"/>
    <lineage>
        <taxon>Bacteria</taxon>
        <taxon>Pseudomonadati</taxon>
        <taxon>Pseudomonadota</taxon>
        <taxon>Gammaproteobacteria</taxon>
        <taxon>Enterobacterales</taxon>
        <taxon>Erwiniaceae</taxon>
        <taxon>Erwinia</taxon>
    </lineage>
</organism>
<reference key="1">
    <citation type="journal article" date="2008" name="Environ. Microbiol.">
        <title>The genome of Erwinia tasmaniensis strain Et1/99, a non-pathogenic bacterium in the genus Erwinia.</title>
        <authorList>
            <person name="Kube M."/>
            <person name="Migdoll A.M."/>
            <person name="Mueller I."/>
            <person name="Kuhl H."/>
            <person name="Beck A."/>
            <person name="Reinhardt R."/>
            <person name="Geider K."/>
        </authorList>
    </citation>
    <scope>NUCLEOTIDE SEQUENCE [LARGE SCALE GENOMIC DNA]</scope>
    <source>
        <strain>DSM 17950 / CFBP 7177 / CIP 109463 / NCPPB 4357 / Et1/99</strain>
    </source>
</reference>
<proteinExistence type="inferred from homology"/>
<name>HEMH_ERWT9</name>
<sequence>MRQDKPGVLLVNLGTPDAPTTSAVKRYLKQFLSDKRVVDAPRWLWWPLLNFGILPIRSPRVSKLYASVWMDEGSPLMVYSQRQRNALAARLDMPVALGMSYGNPSLKSAIDSLMAEGVTRLIVLPLYPQFSCSTVAAVWDGITQVFAGYRSLPSVHFIRDYAQHPAYIAALKASVERSFAQHGKPDLLVTSFHGIPQRFADEGDDYPQRCYETFEALKASLGLGDDEAMLTFQSRFGREPWLMPYTDKTMESLPGKGVKHVQIMSPGFASDCLETLEEIDGENREIFLHAGGTRFEYIPALNDDEAHITMMLELVNQYR</sequence>
<feature type="chain" id="PRO_1000116045" description="Ferrochelatase">
    <location>
        <begin position="1"/>
        <end position="319"/>
    </location>
</feature>
<feature type="binding site" evidence="1">
    <location>
        <position position="193"/>
    </location>
    <ligand>
        <name>Fe cation</name>
        <dbReference type="ChEBI" id="CHEBI:24875"/>
    </ligand>
</feature>
<feature type="binding site" evidence="1">
    <location>
        <position position="274"/>
    </location>
    <ligand>
        <name>Fe cation</name>
        <dbReference type="ChEBI" id="CHEBI:24875"/>
    </ligand>
</feature>
<dbReference type="EC" id="4.98.1.1" evidence="1"/>
<dbReference type="EMBL" id="CU468135">
    <property type="protein sequence ID" value="CAO97510.1"/>
    <property type="molecule type" value="Genomic_DNA"/>
</dbReference>
<dbReference type="RefSeq" id="WP_012442176.1">
    <property type="nucleotide sequence ID" value="NC_010694.1"/>
</dbReference>
<dbReference type="SMR" id="B2VHX1"/>
<dbReference type="STRING" id="465817.ETA_24640"/>
<dbReference type="KEGG" id="eta:ETA_24640"/>
<dbReference type="eggNOG" id="COG0276">
    <property type="taxonomic scope" value="Bacteria"/>
</dbReference>
<dbReference type="HOGENOM" id="CLU_018884_0_0_6"/>
<dbReference type="OrthoDB" id="9809741at2"/>
<dbReference type="UniPathway" id="UPA00252">
    <property type="reaction ID" value="UER00325"/>
</dbReference>
<dbReference type="Proteomes" id="UP000001726">
    <property type="component" value="Chromosome"/>
</dbReference>
<dbReference type="GO" id="GO:0005737">
    <property type="term" value="C:cytoplasm"/>
    <property type="evidence" value="ECO:0007669"/>
    <property type="project" value="UniProtKB-SubCell"/>
</dbReference>
<dbReference type="GO" id="GO:0004325">
    <property type="term" value="F:ferrochelatase activity"/>
    <property type="evidence" value="ECO:0007669"/>
    <property type="project" value="UniProtKB-UniRule"/>
</dbReference>
<dbReference type="GO" id="GO:0046872">
    <property type="term" value="F:metal ion binding"/>
    <property type="evidence" value="ECO:0007669"/>
    <property type="project" value="UniProtKB-KW"/>
</dbReference>
<dbReference type="GO" id="GO:0006783">
    <property type="term" value="P:heme biosynthetic process"/>
    <property type="evidence" value="ECO:0007669"/>
    <property type="project" value="UniProtKB-UniRule"/>
</dbReference>
<dbReference type="CDD" id="cd00419">
    <property type="entry name" value="Ferrochelatase_C"/>
    <property type="match status" value="1"/>
</dbReference>
<dbReference type="CDD" id="cd03411">
    <property type="entry name" value="Ferrochelatase_N"/>
    <property type="match status" value="1"/>
</dbReference>
<dbReference type="FunFam" id="3.40.50.1400:FF:000002">
    <property type="entry name" value="Ferrochelatase"/>
    <property type="match status" value="1"/>
</dbReference>
<dbReference type="Gene3D" id="3.40.50.1400">
    <property type="match status" value="2"/>
</dbReference>
<dbReference type="HAMAP" id="MF_00323">
    <property type="entry name" value="Ferrochelatase"/>
    <property type="match status" value="1"/>
</dbReference>
<dbReference type="InterPro" id="IPR001015">
    <property type="entry name" value="Ferrochelatase"/>
</dbReference>
<dbReference type="InterPro" id="IPR019772">
    <property type="entry name" value="Ferrochelatase_AS"/>
</dbReference>
<dbReference type="InterPro" id="IPR033644">
    <property type="entry name" value="Ferrochelatase_C"/>
</dbReference>
<dbReference type="InterPro" id="IPR033659">
    <property type="entry name" value="Ferrochelatase_N"/>
</dbReference>
<dbReference type="NCBIfam" id="TIGR00109">
    <property type="entry name" value="hemH"/>
    <property type="match status" value="1"/>
</dbReference>
<dbReference type="PANTHER" id="PTHR11108">
    <property type="entry name" value="FERROCHELATASE"/>
    <property type="match status" value="1"/>
</dbReference>
<dbReference type="PANTHER" id="PTHR11108:SF1">
    <property type="entry name" value="FERROCHELATASE, MITOCHONDRIAL"/>
    <property type="match status" value="1"/>
</dbReference>
<dbReference type="Pfam" id="PF00762">
    <property type="entry name" value="Ferrochelatase"/>
    <property type="match status" value="1"/>
</dbReference>
<dbReference type="SUPFAM" id="SSF53800">
    <property type="entry name" value="Chelatase"/>
    <property type="match status" value="1"/>
</dbReference>
<dbReference type="PROSITE" id="PS00534">
    <property type="entry name" value="FERROCHELATASE"/>
    <property type="match status" value="1"/>
</dbReference>
<evidence type="ECO:0000255" key="1">
    <source>
        <dbReference type="HAMAP-Rule" id="MF_00323"/>
    </source>
</evidence>
<accession>B2VHX1</accession>
<comment type="function">
    <text evidence="1">Catalyzes the ferrous insertion into protoporphyrin IX.</text>
</comment>
<comment type="catalytic activity">
    <reaction evidence="1">
        <text>heme b + 2 H(+) = protoporphyrin IX + Fe(2+)</text>
        <dbReference type="Rhea" id="RHEA:22584"/>
        <dbReference type="ChEBI" id="CHEBI:15378"/>
        <dbReference type="ChEBI" id="CHEBI:29033"/>
        <dbReference type="ChEBI" id="CHEBI:57306"/>
        <dbReference type="ChEBI" id="CHEBI:60344"/>
        <dbReference type="EC" id="4.98.1.1"/>
    </reaction>
</comment>
<comment type="pathway">
    <text evidence="1">Porphyrin-containing compound metabolism; protoheme biosynthesis; protoheme from protoporphyrin-IX: step 1/1.</text>
</comment>
<comment type="subcellular location">
    <subcellularLocation>
        <location evidence="1">Cytoplasm</location>
    </subcellularLocation>
</comment>
<comment type="similarity">
    <text evidence="1">Belongs to the ferrochelatase family.</text>
</comment>